<proteinExistence type="inferred from homology"/>
<accession>B0KQ91</accession>
<comment type="function">
    <text evidence="1">Catalyzes the ATP-dependent phosphorylation of N-acetyl-L-glutamate.</text>
</comment>
<comment type="catalytic activity">
    <reaction evidence="1">
        <text>N-acetyl-L-glutamate + ATP = N-acetyl-L-glutamyl 5-phosphate + ADP</text>
        <dbReference type="Rhea" id="RHEA:14629"/>
        <dbReference type="ChEBI" id="CHEBI:30616"/>
        <dbReference type="ChEBI" id="CHEBI:44337"/>
        <dbReference type="ChEBI" id="CHEBI:57936"/>
        <dbReference type="ChEBI" id="CHEBI:456216"/>
        <dbReference type="EC" id="2.7.2.8"/>
    </reaction>
</comment>
<comment type="pathway">
    <text evidence="1">Amino-acid biosynthesis; L-arginine biosynthesis; N(2)-acetyl-L-ornithine from L-glutamate: step 2/4.</text>
</comment>
<comment type="subcellular location">
    <subcellularLocation>
        <location evidence="1">Cytoplasm</location>
    </subcellularLocation>
</comment>
<comment type="similarity">
    <text evidence="1">Belongs to the acetylglutamate kinase family. ArgB subfamily.</text>
</comment>
<evidence type="ECO:0000255" key="1">
    <source>
        <dbReference type="HAMAP-Rule" id="MF_00082"/>
    </source>
</evidence>
<protein>
    <recommendedName>
        <fullName evidence="1">Acetylglutamate kinase</fullName>
        <ecNumber evidence="1">2.7.2.8</ecNumber>
    </recommendedName>
    <alternativeName>
        <fullName evidence="1">N-acetyl-L-glutamate 5-phosphotransferase</fullName>
    </alternativeName>
    <alternativeName>
        <fullName evidence="1">NAG kinase</fullName>
        <shortName evidence="1">NAGK</shortName>
    </alternativeName>
</protein>
<keyword id="KW-0028">Amino-acid biosynthesis</keyword>
<keyword id="KW-0055">Arginine biosynthesis</keyword>
<keyword id="KW-0067">ATP-binding</keyword>
<keyword id="KW-0963">Cytoplasm</keyword>
<keyword id="KW-0418">Kinase</keyword>
<keyword id="KW-0547">Nucleotide-binding</keyword>
<keyword id="KW-0808">Transferase</keyword>
<gene>
    <name evidence="1" type="primary">argB</name>
    <name type="ordered locus">PputGB1_5339</name>
</gene>
<sequence length="301" mass="31981">MTLDRDAASHVAEVLSEALPYIRRFVGKTLVIKYGGNAMESEELKTGFARDIVLMKAVGINPVVVHGGGPQIGDLLKRLSIESHFIDGMRVTDSATMDVVEMVLGGQVNKDIVNLINRHGGSAIGLTGKDAELIRARKLTVSRQTPEMTTPEIIDIGHVGEVVSVNTDLLNMLVKGDFIPVIAPIGVGANGESYNINADLVAGKVAEALKAEKLMLLTNIAGLMDKQGQVLTGLTTEQVNELIADGTIYGGMLPKIRCALDAVQGGVNSSHIIDGRVPNAVLLEIFTDSGVGTLITNRKPR</sequence>
<dbReference type="EC" id="2.7.2.8" evidence="1"/>
<dbReference type="EMBL" id="CP000926">
    <property type="protein sequence ID" value="ABZ01221.1"/>
    <property type="molecule type" value="Genomic_DNA"/>
</dbReference>
<dbReference type="RefSeq" id="WP_012274824.1">
    <property type="nucleotide sequence ID" value="NC_010322.1"/>
</dbReference>
<dbReference type="SMR" id="B0KQ91"/>
<dbReference type="KEGG" id="ppg:PputGB1_5339"/>
<dbReference type="eggNOG" id="COG0548">
    <property type="taxonomic scope" value="Bacteria"/>
</dbReference>
<dbReference type="HOGENOM" id="CLU_053680_0_0_6"/>
<dbReference type="UniPathway" id="UPA00068">
    <property type="reaction ID" value="UER00107"/>
</dbReference>
<dbReference type="Proteomes" id="UP000002157">
    <property type="component" value="Chromosome"/>
</dbReference>
<dbReference type="GO" id="GO:0005737">
    <property type="term" value="C:cytoplasm"/>
    <property type="evidence" value="ECO:0007669"/>
    <property type="project" value="UniProtKB-SubCell"/>
</dbReference>
<dbReference type="GO" id="GO:0003991">
    <property type="term" value="F:acetylglutamate kinase activity"/>
    <property type="evidence" value="ECO:0007669"/>
    <property type="project" value="UniProtKB-UniRule"/>
</dbReference>
<dbReference type="GO" id="GO:0005524">
    <property type="term" value="F:ATP binding"/>
    <property type="evidence" value="ECO:0007669"/>
    <property type="project" value="UniProtKB-UniRule"/>
</dbReference>
<dbReference type="GO" id="GO:0042450">
    <property type="term" value="P:arginine biosynthetic process via ornithine"/>
    <property type="evidence" value="ECO:0007669"/>
    <property type="project" value="UniProtKB-UniRule"/>
</dbReference>
<dbReference type="GO" id="GO:0006526">
    <property type="term" value="P:L-arginine biosynthetic process"/>
    <property type="evidence" value="ECO:0007669"/>
    <property type="project" value="UniProtKB-UniPathway"/>
</dbReference>
<dbReference type="CDD" id="cd04250">
    <property type="entry name" value="AAK_NAGK-C"/>
    <property type="match status" value="1"/>
</dbReference>
<dbReference type="FunFam" id="3.40.1160.10:FF:000004">
    <property type="entry name" value="Acetylglutamate kinase"/>
    <property type="match status" value="1"/>
</dbReference>
<dbReference type="Gene3D" id="3.40.1160.10">
    <property type="entry name" value="Acetylglutamate kinase-like"/>
    <property type="match status" value="1"/>
</dbReference>
<dbReference type="HAMAP" id="MF_00082">
    <property type="entry name" value="ArgB"/>
    <property type="match status" value="1"/>
</dbReference>
<dbReference type="InterPro" id="IPR036393">
    <property type="entry name" value="AceGlu_kinase-like_sf"/>
</dbReference>
<dbReference type="InterPro" id="IPR004662">
    <property type="entry name" value="AcgluKinase_fam"/>
</dbReference>
<dbReference type="InterPro" id="IPR037528">
    <property type="entry name" value="ArgB"/>
</dbReference>
<dbReference type="InterPro" id="IPR001048">
    <property type="entry name" value="Asp/Glu/Uridylate_kinase"/>
</dbReference>
<dbReference type="InterPro" id="IPR001057">
    <property type="entry name" value="Glu/AcGlu_kinase"/>
</dbReference>
<dbReference type="InterPro" id="IPR041727">
    <property type="entry name" value="NAGK-C"/>
</dbReference>
<dbReference type="NCBIfam" id="TIGR00761">
    <property type="entry name" value="argB"/>
    <property type="match status" value="1"/>
</dbReference>
<dbReference type="PANTHER" id="PTHR23342">
    <property type="entry name" value="N-ACETYLGLUTAMATE SYNTHASE"/>
    <property type="match status" value="1"/>
</dbReference>
<dbReference type="PANTHER" id="PTHR23342:SF0">
    <property type="entry name" value="N-ACETYLGLUTAMATE SYNTHASE, MITOCHONDRIAL"/>
    <property type="match status" value="1"/>
</dbReference>
<dbReference type="Pfam" id="PF00696">
    <property type="entry name" value="AA_kinase"/>
    <property type="match status" value="1"/>
</dbReference>
<dbReference type="PIRSF" id="PIRSF000728">
    <property type="entry name" value="NAGK"/>
    <property type="match status" value="1"/>
</dbReference>
<dbReference type="PRINTS" id="PR00474">
    <property type="entry name" value="GLU5KINASE"/>
</dbReference>
<dbReference type="SUPFAM" id="SSF53633">
    <property type="entry name" value="Carbamate kinase-like"/>
    <property type="match status" value="1"/>
</dbReference>
<feature type="chain" id="PRO_1000075317" description="Acetylglutamate kinase">
    <location>
        <begin position="1"/>
        <end position="301"/>
    </location>
</feature>
<feature type="binding site" evidence="1">
    <location>
        <begin position="68"/>
        <end position="69"/>
    </location>
    <ligand>
        <name>substrate</name>
    </ligand>
</feature>
<feature type="binding site" evidence="1">
    <location>
        <position position="90"/>
    </location>
    <ligand>
        <name>substrate</name>
    </ligand>
</feature>
<feature type="binding site" evidence="1">
    <location>
        <position position="195"/>
    </location>
    <ligand>
        <name>substrate</name>
    </ligand>
</feature>
<feature type="site" description="Transition state stabilizer" evidence="1">
    <location>
        <position position="33"/>
    </location>
</feature>
<feature type="site" description="Transition state stabilizer" evidence="1">
    <location>
        <position position="255"/>
    </location>
</feature>
<name>ARGB_PSEPG</name>
<organism>
    <name type="scientific">Pseudomonas putida (strain GB-1)</name>
    <dbReference type="NCBI Taxonomy" id="76869"/>
    <lineage>
        <taxon>Bacteria</taxon>
        <taxon>Pseudomonadati</taxon>
        <taxon>Pseudomonadota</taxon>
        <taxon>Gammaproteobacteria</taxon>
        <taxon>Pseudomonadales</taxon>
        <taxon>Pseudomonadaceae</taxon>
        <taxon>Pseudomonas</taxon>
    </lineage>
</organism>
<reference key="1">
    <citation type="submission" date="2008-01" db="EMBL/GenBank/DDBJ databases">
        <title>Complete sequence of Pseudomonas putida GB-1.</title>
        <authorList>
            <consortium name="US DOE Joint Genome Institute"/>
            <person name="Copeland A."/>
            <person name="Lucas S."/>
            <person name="Lapidus A."/>
            <person name="Barry K."/>
            <person name="Glavina del Rio T."/>
            <person name="Dalin E."/>
            <person name="Tice H."/>
            <person name="Pitluck S."/>
            <person name="Bruce D."/>
            <person name="Goodwin L."/>
            <person name="Chertkov O."/>
            <person name="Brettin T."/>
            <person name="Detter J.C."/>
            <person name="Han C."/>
            <person name="Kuske C.R."/>
            <person name="Schmutz J."/>
            <person name="Larimer F."/>
            <person name="Land M."/>
            <person name="Hauser L."/>
            <person name="Kyrpides N."/>
            <person name="Kim E."/>
            <person name="McCarthy J.K."/>
            <person name="Richardson P."/>
        </authorList>
    </citation>
    <scope>NUCLEOTIDE SEQUENCE [LARGE SCALE GENOMIC DNA]</scope>
    <source>
        <strain>GB-1</strain>
    </source>
</reference>